<gene>
    <name evidence="1" type="primary">rps10</name>
</gene>
<protein>
    <recommendedName>
        <fullName evidence="1">Small ribosomal subunit protein uS10c</fullName>
    </recommendedName>
    <alternativeName>
        <fullName evidence="2">30S ribosomal protein S10, chloroplastic</fullName>
    </alternativeName>
</protein>
<keyword id="KW-0150">Chloroplast</keyword>
<keyword id="KW-0934">Plastid</keyword>
<keyword id="KW-0687">Ribonucleoprotein</keyword>
<keyword id="KW-0689">Ribosomal protein</keyword>
<proteinExistence type="inferred from homology"/>
<organism>
    <name type="scientific">Trieres chinensis</name>
    <name type="common">Marine centric diatom</name>
    <name type="synonym">Odontella sinensis</name>
    <dbReference type="NCBI Taxonomy" id="1514140"/>
    <lineage>
        <taxon>Eukaryota</taxon>
        <taxon>Sar</taxon>
        <taxon>Stramenopiles</taxon>
        <taxon>Ochrophyta</taxon>
        <taxon>Bacillariophyta</taxon>
        <taxon>Mediophyceae</taxon>
        <taxon>Biddulphiophycidae</taxon>
        <taxon>Eupodiscales</taxon>
        <taxon>Parodontellaceae</taxon>
        <taxon>Trieres</taxon>
    </lineage>
</organism>
<sequence>MEIKTNAKIRVRLESFNHELLTSACRKISDTIQNSDATKLSVVSLPTDKRIYCVLRSPHVDKDSREHFELRVHKRVIEIYYDPTVKCRIISKFRITVRSIISY</sequence>
<evidence type="ECO:0000255" key="1">
    <source>
        <dbReference type="HAMAP-Rule" id="MF_00508"/>
    </source>
</evidence>
<evidence type="ECO:0000305" key="2"/>
<name>RR10_TRICV</name>
<comment type="function">
    <text evidence="1">Involved in the binding of tRNA to the ribosomes.</text>
</comment>
<comment type="subunit">
    <text evidence="1">Part of the 30S ribosomal subunit.</text>
</comment>
<comment type="subcellular location">
    <subcellularLocation>
        <location evidence="1">Plastid</location>
        <location evidence="1">Chloroplast</location>
    </subcellularLocation>
</comment>
<comment type="similarity">
    <text evidence="1">Belongs to the universal ribosomal protein uS10 family.</text>
</comment>
<dbReference type="EMBL" id="Z67753">
    <property type="protein sequence ID" value="CAA91620.1"/>
    <property type="molecule type" value="Genomic_DNA"/>
</dbReference>
<dbReference type="PIR" id="S78247">
    <property type="entry name" value="S78247"/>
</dbReference>
<dbReference type="RefSeq" id="NP_043588.1">
    <property type="nucleotide sequence ID" value="NC_001713.1"/>
</dbReference>
<dbReference type="SMR" id="P49498"/>
<dbReference type="GeneID" id="801726"/>
<dbReference type="GO" id="GO:0009507">
    <property type="term" value="C:chloroplast"/>
    <property type="evidence" value="ECO:0007669"/>
    <property type="project" value="UniProtKB-SubCell"/>
</dbReference>
<dbReference type="GO" id="GO:1990904">
    <property type="term" value="C:ribonucleoprotein complex"/>
    <property type="evidence" value="ECO:0007669"/>
    <property type="project" value="UniProtKB-KW"/>
</dbReference>
<dbReference type="GO" id="GO:0005840">
    <property type="term" value="C:ribosome"/>
    <property type="evidence" value="ECO:0007669"/>
    <property type="project" value="UniProtKB-KW"/>
</dbReference>
<dbReference type="GO" id="GO:0003735">
    <property type="term" value="F:structural constituent of ribosome"/>
    <property type="evidence" value="ECO:0007669"/>
    <property type="project" value="InterPro"/>
</dbReference>
<dbReference type="GO" id="GO:0000049">
    <property type="term" value="F:tRNA binding"/>
    <property type="evidence" value="ECO:0007669"/>
    <property type="project" value="UniProtKB-UniRule"/>
</dbReference>
<dbReference type="GO" id="GO:0006412">
    <property type="term" value="P:translation"/>
    <property type="evidence" value="ECO:0007669"/>
    <property type="project" value="UniProtKB-UniRule"/>
</dbReference>
<dbReference type="Gene3D" id="3.30.70.600">
    <property type="entry name" value="Ribosomal protein S10 domain"/>
    <property type="match status" value="1"/>
</dbReference>
<dbReference type="HAMAP" id="MF_00508">
    <property type="entry name" value="Ribosomal_uS10"/>
    <property type="match status" value="1"/>
</dbReference>
<dbReference type="InterPro" id="IPR001848">
    <property type="entry name" value="Ribosomal_uS10"/>
</dbReference>
<dbReference type="InterPro" id="IPR027486">
    <property type="entry name" value="Ribosomal_uS10_dom"/>
</dbReference>
<dbReference type="InterPro" id="IPR036838">
    <property type="entry name" value="Ribosomal_uS10_dom_sf"/>
</dbReference>
<dbReference type="NCBIfam" id="NF001861">
    <property type="entry name" value="PRK00596.1"/>
    <property type="match status" value="1"/>
</dbReference>
<dbReference type="NCBIfam" id="TIGR01049">
    <property type="entry name" value="rpsJ_bact"/>
    <property type="match status" value="1"/>
</dbReference>
<dbReference type="PANTHER" id="PTHR11700">
    <property type="entry name" value="30S RIBOSOMAL PROTEIN S10 FAMILY MEMBER"/>
    <property type="match status" value="1"/>
</dbReference>
<dbReference type="Pfam" id="PF00338">
    <property type="entry name" value="Ribosomal_S10"/>
    <property type="match status" value="1"/>
</dbReference>
<dbReference type="PRINTS" id="PR00971">
    <property type="entry name" value="RIBOSOMALS10"/>
</dbReference>
<dbReference type="SMART" id="SM01403">
    <property type="entry name" value="Ribosomal_S10"/>
    <property type="match status" value="1"/>
</dbReference>
<dbReference type="SUPFAM" id="SSF54999">
    <property type="entry name" value="Ribosomal protein S10"/>
    <property type="match status" value="1"/>
</dbReference>
<feature type="chain" id="PRO_0000146668" description="Small ribosomal subunit protein uS10c">
    <location>
        <begin position="1"/>
        <end position="103"/>
    </location>
</feature>
<geneLocation type="chloroplast"/>
<accession>P49498</accession>
<reference key="1">
    <citation type="journal article" date="1995" name="Plant Mol. Biol. Rep.">
        <title>The chloroplast genome of a chlorophyll a+c-containing alga, Odontella sinensis.</title>
        <authorList>
            <person name="Kowallik K.V."/>
            <person name="Stoebe B."/>
            <person name="Schaffran I."/>
            <person name="Kroth-Pancic P."/>
            <person name="Freier U."/>
        </authorList>
    </citation>
    <scope>NUCLEOTIDE SEQUENCE [LARGE SCALE GENOMIC DNA]</scope>
</reference>